<reference key="1">
    <citation type="journal article" date="2009" name="PLoS Genet.">
        <title>Organised genome dynamics in the Escherichia coli species results in highly diverse adaptive paths.</title>
        <authorList>
            <person name="Touchon M."/>
            <person name="Hoede C."/>
            <person name="Tenaillon O."/>
            <person name="Barbe V."/>
            <person name="Baeriswyl S."/>
            <person name="Bidet P."/>
            <person name="Bingen E."/>
            <person name="Bonacorsi S."/>
            <person name="Bouchier C."/>
            <person name="Bouvet O."/>
            <person name="Calteau A."/>
            <person name="Chiapello H."/>
            <person name="Clermont O."/>
            <person name="Cruveiller S."/>
            <person name="Danchin A."/>
            <person name="Diard M."/>
            <person name="Dossat C."/>
            <person name="Karoui M.E."/>
            <person name="Frapy E."/>
            <person name="Garry L."/>
            <person name="Ghigo J.M."/>
            <person name="Gilles A.M."/>
            <person name="Johnson J."/>
            <person name="Le Bouguenec C."/>
            <person name="Lescat M."/>
            <person name="Mangenot S."/>
            <person name="Martinez-Jehanne V."/>
            <person name="Matic I."/>
            <person name="Nassif X."/>
            <person name="Oztas S."/>
            <person name="Petit M.A."/>
            <person name="Pichon C."/>
            <person name="Rouy Z."/>
            <person name="Ruf C.S."/>
            <person name="Schneider D."/>
            <person name="Tourret J."/>
            <person name="Vacherie B."/>
            <person name="Vallenet D."/>
            <person name="Medigue C."/>
            <person name="Rocha E.P.C."/>
            <person name="Denamur E."/>
        </authorList>
    </citation>
    <scope>NUCLEOTIDE SEQUENCE [LARGE SCALE GENOMIC DNA]</scope>
    <source>
        <strain>IAI39 / ExPEC</strain>
    </source>
</reference>
<feature type="chain" id="PRO_0000380372" description="DNA ligase">
    <location>
        <begin position="1"/>
        <end position="671"/>
    </location>
</feature>
<feature type="domain" description="BRCT" evidence="1">
    <location>
        <begin position="593"/>
        <end position="671"/>
    </location>
</feature>
<feature type="active site" description="N6-AMP-lysine intermediate" evidence="1">
    <location>
        <position position="115"/>
    </location>
</feature>
<feature type="binding site" evidence="1">
    <location>
        <begin position="32"/>
        <end position="36"/>
    </location>
    <ligand>
        <name>NAD(+)</name>
        <dbReference type="ChEBI" id="CHEBI:57540"/>
    </ligand>
</feature>
<feature type="binding site" evidence="1">
    <location>
        <begin position="81"/>
        <end position="82"/>
    </location>
    <ligand>
        <name>NAD(+)</name>
        <dbReference type="ChEBI" id="CHEBI:57540"/>
    </ligand>
</feature>
<feature type="binding site" evidence="1">
    <location>
        <position position="113"/>
    </location>
    <ligand>
        <name>NAD(+)</name>
        <dbReference type="ChEBI" id="CHEBI:57540"/>
    </ligand>
</feature>
<feature type="binding site" evidence="1">
    <location>
        <position position="136"/>
    </location>
    <ligand>
        <name>NAD(+)</name>
        <dbReference type="ChEBI" id="CHEBI:57540"/>
    </ligand>
</feature>
<feature type="binding site" evidence="1">
    <location>
        <position position="173"/>
    </location>
    <ligand>
        <name>NAD(+)</name>
        <dbReference type="ChEBI" id="CHEBI:57540"/>
    </ligand>
</feature>
<feature type="binding site" evidence="1">
    <location>
        <position position="290"/>
    </location>
    <ligand>
        <name>NAD(+)</name>
        <dbReference type="ChEBI" id="CHEBI:57540"/>
    </ligand>
</feature>
<feature type="binding site" evidence="1">
    <location>
        <position position="314"/>
    </location>
    <ligand>
        <name>NAD(+)</name>
        <dbReference type="ChEBI" id="CHEBI:57540"/>
    </ligand>
</feature>
<feature type="binding site" evidence="1">
    <location>
        <position position="408"/>
    </location>
    <ligand>
        <name>Zn(2+)</name>
        <dbReference type="ChEBI" id="CHEBI:29105"/>
    </ligand>
</feature>
<feature type="binding site" evidence="1">
    <location>
        <position position="411"/>
    </location>
    <ligand>
        <name>Zn(2+)</name>
        <dbReference type="ChEBI" id="CHEBI:29105"/>
    </ligand>
</feature>
<feature type="binding site" evidence="1">
    <location>
        <position position="426"/>
    </location>
    <ligand>
        <name>Zn(2+)</name>
        <dbReference type="ChEBI" id="CHEBI:29105"/>
    </ligand>
</feature>
<feature type="binding site" evidence="1">
    <location>
        <position position="432"/>
    </location>
    <ligand>
        <name>Zn(2+)</name>
        <dbReference type="ChEBI" id="CHEBI:29105"/>
    </ligand>
</feature>
<evidence type="ECO:0000255" key="1">
    <source>
        <dbReference type="HAMAP-Rule" id="MF_01588"/>
    </source>
</evidence>
<gene>
    <name evidence="1" type="primary">ligA</name>
    <name type="ordered locus">ECIAI39_2556</name>
</gene>
<proteinExistence type="inferred from homology"/>
<comment type="function">
    <text evidence="1">DNA ligase that catalyzes the formation of phosphodiester linkages between 5'-phosphoryl and 3'-hydroxyl groups in double-stranded DNA using NAD as a coenzyme and as the energy source for the reaction. It is essential for DNA replication and repair of damaged DNA.</text>
</comment>
<comment type="catalytic activity">
    <reaction evidence="1">
        <text>NAD(+) + (deoxyribonucleotide)n-3'-hydroxyl + 5'-phospho-(deoxyribonucleotide)m = (deoxyribonucleotide)n+m + AMP + beta-nicotinamide D-nucleotide.</text>
        <dbReference type="EC" id="6.5.1.2"/>
    </reaction>
</comment>
<comment type="cofactor">
    <cofactor evidence="1">
        <name>Mg(2+)</name>
        <dbReference type="ChEBI" id="CHEBI:18420"/>
    </cofactor>
    <cofactor evidence="1">
        <name>Mn(2+)</name>
        <dbReference type="ChEBI" id="CHEBI:29035"/>
    </cofactor>
</comment>
<comment type="similarity">
    <text evidence="1">Belongs to the NAD-dependent DNA ligase family. LigA subfamily.</text>
</comment>
<organism>
    <name type="scientific">Escherichia coli O7:K1 (strain IAI39 / ExPEC)</name>
    <dbReference type="NCBI Taxonomy" id="585057"/>
    <lineage>
        <taxon>Bacteria</taxon>
        <taxon>Pseudomonadati</taxon>
        <taxon>Pseudomonadota</taxon>
        <taxon>Gammaproteobacteria</taxon>
        <taxon>Enterobacterales</taxon>
        <taxon>Enterobacteriaceae</taxon>
        <taxon>Escherichia</taxon>
    </lineage>
</organism>
<protein>
    <recommendedName>
        <fullName evidence="1">DNA ligase</fullName>
        <ecNumber evidence="1">6.5.1.2</ecNumber>
    </recommendedName>
    <alternativeName>
        <fullName evidence="1">Polydeoxyribonucleotide synthase [NAD(+)]</fullName>
    </alternativeName>
</protein>
<accession>B7NPU7</accession>
<sequence length="671" mass="73579">MESIEQQLTELRTTLRHHEYLYHVMDAPEIPDAEYDRLMRELRELETKHPELITPDSPTQRVGAAPLAAFSQIRHEVPMLSLDNVFDEESFLAFNKRVQDRLKSNEKVTWCCELKLDGLAVSILYENGVLVSAATRGDGTTGEDITSNVRTIRAIPLKLHGENIPARLEVRGEVFLPQAGFEKINEDARRTGGKVFANPRNAAAGSLRQLDPRITAKRPLTFFCYGVGVLEGGELPDTHLGRLLQFKKWGLPVSDRVTLCESAEEVLAFYHKVEEDRPTLGFDIDGVVIKINSLAQQEQLGFVARAPRWAVAFKFPAQEQMTFVRDVEFQVGRTGAITPVARLEPVHVAGVLVSNATLHNADEIERLGLRIGDKVVIRRAGDVIPQVVNVVLSERPEDTREVVFPTHCPVCGSDVERVEGEAVARCTGGLICGAQRKESLKHFVSRRAMDVDGMGDKIIDQLVEKEYVHTPADLFKLTAGKLTGLERMGPKSAQNVVNALEKAKETTFARFLYALGIREVGEATAAGLAAYFGTLEALEAASIEELQKVPDVGIVVASHVHNFFAEESNRNVISELLAEGVHWPAPVVINAEEIDSPFAGKTVVLTGSLSQMSRDDAKARLVELGAKVAGSVSKKTDLVIAGEAAGSKLAKAQELGIEVIDEAEMLRLLGS</sequence>
<keyword id="KW-0227">DNA damage</keyword>
<keyword id="KW-0234">DNA repair</keyword>
<keyword id="KW-0235">DNA replication</keyword>
<keyword id="KW-0436">Ligase</keyword>
<keyword id="KW-0460">Magnesium</keyword>
<keyword id="KW-0464">Manganese</keyword>
<keyword id="KW-0479">Metal-binding</keyword>
<keyword id="KW-0520">NAD</keyword>
<keyword id="KW-0862">Zinc</keyword>
<name>DNLJ_ECO7I</name>
<dbReference type="EC" id="6.5.1.2" evidence="1"/>
<dbReference type="EMBL" id="CU928164">
    <property type="protein sequence ID" value="CAR18680.1"/>
    <property type="molecule type" value="Genomic_DNA"/>
</dbReference>
<dbReference type="RefSeq" id="WP_000443681.1">
    <property type="nucleotide sequence ID" value="NC_011750.1"/>
</dbReference>
<dbReference type="RefSeq" id="YP_002408506.1">
    <property type="nucleotide sequence ID" value="NC_011750.1"/>
</dbReference>
<dbReference type="SMR" id="B7NPU7"/>
<dbReference type="STRING" id="585057.ECIAI39_2556"/>
<dbReference type="KEGG" id="ect:ECIAI39_2556"/>
<dbReference type="PATRIC" id="fig|585057.6.peg.2663"/>
<dbReference type="HOGENOM" id="CLU_007764_2_1_6"/>
<dbReference type="Proteomes" id="UP000000749">
    <property type="component" value="Chromosome"/>
</dbReference>
<dbReference type="GO" id="GO:0005829">
    <property type="term" value="C:cytosol"/>
    <property type="evidence" value="ECO:0007669"/>
    <property type="project" value="TreeGrafter"/>
</dbReference>
<dbReference type="GO" id="GO:0003677">
    <property type="term" value="F:DNA binding"/>
    <property type="evidence" value="ECO:0007669"/>
    <property type="project" value="InterPro"/>
</dbReference>
<dbReference type="GO" id="GO:0003911">
    <property type="term" value="F:DNA ligase (NAD+) activity"/>
    <property type="evidence" value="ECO:0007669"/>
    <property type="project" value="UniProtKB-UniRule"/>
</dbReference>
<dbReference type="GO" id="GO:0046872">
    <property type="term" value="F:metal ion binding"/>
    <property type="evidence" value="ECO:0007669"/>
    <property type="project" value="UniProtKB-KW"/>
</dbReference>
<dbReference type="GO" id="GO:0006281">
    <property type="term" value="P:DNA repair"/>
    <property type="evidence" value="ECO:0007669"/>
    <property type="project" value="UniProtKB-KW"/>
</dbReference>
<dbReference type="GO" id="GO:0006260">
    <property type="term" value="P:DNA replication"/>
    <property type="evidence" value="ECO:0007669"/>
    <property type="project" value="UniProtKB-KW"/>
</dbReference>
<dbReference type="CDD" id="cd17748">
    <property type="entry name" value="BRCT_DNA_ligase_like"/>
    <property type="match status" value="1"/>
</dbReference>
<dbReference type="CDD" id="cd00114">
    <property type="entry name" value="LIGANc"/>
    <property type="match status" value="1"/>
</dbReference>
<dbReference type="FunFam" id="1.10.150.20:FF:000006">
    <property type="entry name" value="DNA ligase"/>
    <property type="match status" value="1"/>
</dbReference>
<dbReference type="FunFam" id="1.10.150.20:FF:000007">
    <property type="entry name" value="DNA ligase"/>
    <property type="match status" value="1"/>
</dbReference>
<dbReference type="FunFam" id="1.10.287.610:FF:000002">
    <property type="entry name" value="DNA ligase"/>
    <property type="match status" value="1"/>
</dbReference>
<dbReference type="FunFam" id="2.40.50.140:FF:000012">
    <property type="entry name" value="DNA ligase"/>
    <property type="match status" value="1"/>
</dbReference>
<dbReference type="FunFam" id="3.30.470.30:FF:000001">
    <property type="entry name" value="DNA ligase"/>
    <property type="match status" value="1"/>
</dbReference>
<dbReference type="FunFam" id="3.40.50.10190:FF:000004">
    <property type="entry name" value="DNA ligase"/>
    <property type="match status" value="1"/>
</dbReference>
<dbReference type="FunFam" id="6.20.10.30:FF:000001">
    <property type="entry name" value="DNA ligase"/>
    <property type="match status" value="1"/>
</dbReference>
<dbReference type="Gene3D" id="6.20.10.30">
    <property type="match status" value="1"/>
</dbReference>
<dbReference type="Gene3D" id="1.10.150.20">
    <property type="entry name" value="5' to 3' exonuclease, C-terminal subdomain"/>
    <property type="match status" value="2"/>
</dbReference>
<dbReference type="Gene3D" id="3.40.50.10190">
    <property type="entry name" value="BRCT domain"/>
    <property type="match status" value="1"/>
</dbReference>
<dbReference type="Gene3D" id="3.30.470.30">
    <property type="entry name" value="DNA ligase/mRNA capping enzyme"/>
    <property type="match status" value="1"/>
</dbReference>
<dbReference type="Gene3D" id="1.10.287.610">
    <property type="entry name" value="Helix hairpin bin"/>
    <property type="match status" value="1"/>
</dbReference>
<dbReference type="Gene3D" id="2.40.50.140">
    <property type="entry name" value="Nucleic acid-binding proteins"/>
    <property type="match status" value="1"/>
</dbReference>
<dbReference type="HAMAP" id="MF_01588">
    <property type="entry name" value="DNA_ligase_A"/>
    <property type="match status" value="1"/>
</dbReference>
<dbReference type="InterPro" id="IPR001357">
    <property type="entry name" value="BRCT_dom"/>
</dbReference>
<dbReference type="InterPro" id="IPR036420">
    <property type="entry name" value="BRCT_dom_sf"/>
</dbReference>
<dbReference type="InterPro" id="IPR041663">
    <property type="entry name" value="DisA/LigA_HHH"/>
</dbReference>
<dbReference type="InterPro" id="IPR001679">
    <property type="entry name" value="DNA_ligase"/>
</dbReference>
<dbReference type="InterPro" id="IPR018239">
    <property type="entry name" value="DNA_ligase_AS"/>
</dbReference>
<dbReference type="InterPro" id="IPR033136">
    <property type="entry name" value="DNA_ligase_CS"/>
</dbReference>
<dbReference type="InterPro" id="IPR013839">
    <property type="entry name" value="DNAligase_adenylation"/>
</dbReference>
<dbReference type="InterPro" id="IPR013840">
    <property type="entry name" value="DNAligase_N"/>
</dbReference>
<dbReference type="InterPro" id="IPR003583">
    <property type="entry name" value="Hlx-hairpin-Hlx_DNA-bd_motif"/>
</dbReference>
<dbReference type="InterPro" id="IPR012340">
    <property type="entry name" value="NA-bd_OB-fold"/>
</dbReference>
<dbReference type="InterPro" id="IPR004150">
    <property type="entry name" value="NAD_DNA_ligase_OB"/>
</dbReference>
<dbReference type="InterPro" id="IPR010994">
    <property type="entry name" value="RuvA_2-like"/>
</dbReference>
<dbReference type="InterPro" id="IPR004149">
    <property type="entry name" value="Znf_DNAligase_C4"/>
</dbReference>
<dbReference type="NCBIfam" id="TIGR00575">
    <property type="entry name" value="dnlj"/>
    <property type="match status" value="1"/>
</dbReference>
<dbReference type="NCBIfam" id="NF005932">
    <property type="entry name" value="PRK07956.1"/>
    <property type="match status" value="1"/>
</dbReference>
<dbReference type="PANTHER" id="PTHR23389">
    <property type="entry name" value="CHROMOSOME TRANSMISSION FIDELITY FACTOR 18"/>
    <property type="match status" value="1"/>
</dbReference>
<dbReference type="PANTHER" id="PTHR23389:SF9">
    <property type="entry name" value="DNA LIGASE"/>
    <property type="match status" value="1"/>
</dbReference>
<dbReference type="Pfam" id="PF00533">
    <property type="entry name" value="BRCT"/>
    <property type="match status" value="1"/>
</dbReference>
<dbReference type="Pfam" id="PF01653">
    <property type="entry name" value="DNA_ligase_aden"/>
    <property type="match status" value="1"/>
</dbReference>
<dbReference type="Pfam" id="PF03120">
    <property type="entry name" value="DNA_ligase_OB"/>
    <property type="match status" value="1"/>
</dbReference>
<dbReference type="Pfam" id="PF03119">
    <property type="entry name" value="DNA_ligase_ZBD"/>
    <property type="match status" value="1"/>
</dbReference>
<dbReference type="Pfam" id="PF12826">
    <property type="entry name" value="HHH_2"/>
    <property type="match status" value="1"/>
</dbReference>
<dbReference type="Pfam" id="PF14520">
    <property type="entry name" value="HHH_5"/>
    <property type="match status" value="1"/>
</dbReference>
<dbReference type="Pfam" id="PF22745">
    <property type="entry name" value="Nlig-Ia"/>
    <property type="match status" value="1"/>
</dbReference>
<dbReference type="PIRSF" id="PIRSF001604">
    <property type="entry name" value="LigA"/>
    <property type="match status" value="1"/>
</dbReference>
<dbReference type="SMART" id="SM00292">
    <property type="entry name" value="BRCT"/>
    <property type="match status" value="1"/>
</dbReference>
<dbReference type="SMART" id="SM00278">
    <property type="entry name" value="HhH1"/>
    <property type="match status" value="4"/>
</dbReference>
<dbReference type="SMART" id="SM00532">
    <property type="entry name" value="LIGANc"/>
    <property type="match status" value="1"/>
</dbReference>
<dbReference type="SUPFAM" id="SSF52113">
    <property type="entry name" value="BRCT domain"/>
    <property type="match status" value="1"/>
</dbReference>
<dbReference type="SUPFAM" id="SSF56091">
    <property type="entry name" value="DNA ligase/mRNA capping enzyme, catalytic domain"/>
    <property type="match status" value="1"/>
</dbReference>
<dbReference type="SUPFAM" id="SSF50249">
    <property type="entry name" value="Nucleic acid-binding proteins"/>
    <property type="match status" value="1"/>
</dbReference>
<dbReference type="SUPFAM" id="SSF47781">
    <property type="entry name" value="RuvA domain 2-like"/>
    <property type="match status" value="1"/>
</dbReference>
<dbReference type="PROSITE" id="PS50172">
    <property type="entry name" value="BRCT"/>
    <property type="match status" value="1"/>
</dbReference>
<dbReference type="PROSITE" id="PS01055">
    <property type="entry name" value="DNA_LIGASE_N1"/>
    <property type="match status" value="1"/>
</dbReference>
<dbReference type="PROSITE" id="PS01056">
    <property type="entry name" value="DNA_LIGASE_N2"/>
    <property type="match status" value="1"/>
</dbReference>